<protein>
    <recommendedName>
        <fullName evidence="1">Dual-specificity RNA methyltransferase RlmN</fullName>
        <ecNumber evidence="1">2.1.1.192</ecNumber>
    </recommendedName>
    <alternativeName>
        <fullName evidence="1">23S rRNA (adenine(2503)-C(2))-methyltransferase</fullName>
    </alternativeName>
    <alternativeName>
        <fullName evidence="1">23S rRNA m2A2503 methyltransferase</fullName>
    </alternativeName>
    <alternativeName>
        <fullName evidence="1">Ribosomal RNA large subunit methyltransferase N</fullName>
    </alternativeName>
    <alternativeName>
        <fullName evidence="1">tRNA (adenine(37)-C(2))-methyltransferase</fullName>
    </alternativeName>
    <alternativeName>
        <fullName evidence="1">tRNA m2A37 methyltransferase</fullName>
    </alternativeName>
</protein>
<accession>Q6LU52</accession>
<gene>
    <name evidence="1" type="primary">rlmN</name>
    <name type="ordered locus">PBPRA0760</name>
</gene>
<evidence type="ECO:0000255" key="1">
    <source>
        <dbReference type="HAMAP-Rule" id="MF_01849"/>
    </source>
</evidence>
<evidence type="ECO:0000255" key="2">
    <source>
        <dbReference type="PROSITE-ProRule" id="PRU01266"/>
    </source>
</evidence>
<organism>
    <name type="scientific">Photobacterium profundum (strain SS9)</name>
    <dbReference type="NCBI Taxonomy" id="298386"/>
    <lineage>
        <taxon>Bacteria</taxon>
        <taxon>Pseudomonadati</taxon>
        <taxon>Pseudomonadota</taxon>
        <taxon>Gammaproteobacteria</taxon>
        <taxon>Vibrionales</taxon>
        <taxon>Vibrionaceae</taxon>
        <taxon>Photobacterium</taxon>
    </lineage>
</organism>
<name>RLMN_PHOPR</name>
<comment type="function">
    <text evidence="1">Specifically methylates position 2 of adenine 2503 in 23S rRNA and position 2 of adenine 37 in tRNAs. m2A2503 modification seems to play a crucial role in the proofreading step occurring at the peptidyl transferase center and thus would serve to optimize ribosomal fidelity.</text>
</comment>
<comment type="catalytic activity">
    <reaction evidence="1">
        <text>adenosine(2503) in 23S rRNA + 2 reduced [2Fe-2S]-[ferredoxin] + 2 S-adenosyl-L-methionine = 2-methyladenosine(2503) in 23S rRNA + 5'-deoxyadenosine + L-methionine + 2 oxidized [2Fe-2S]-[ferredoxin] + S-adenosyl-L-homocysteine</text>
        <dbReference type="Rhea" id="RHEA:42916"/>
        <dbReference type="Rhea" id="RHEA-COMP:10000"/>
        <dbReference type="Rhea" id="RHEA-COMP:10001"/>
        <dbReference type="Rhea" id="RHEA-COMP:10152"/>
        <dbReference type="Rhea" id="RHEA-COMP:10282"/>
        <dbReference type="ChEBI" id="CHEBI:17319"/>
        <dbReference type="ChEBI" id="CHEBI:33737"/>
        <dbReference type="ChEBI" id="CHEBI:33738"/>
        <dbReference type="ChEBI" id="CHEBI:57844"/>
        <dbReference type="ChEBI" id="CHEBI:57856"/>
        <dbReference type="ChEBI" id="CHEBI:59789"/>
        <dbReference type="ChEBI" id="CHEBI:74411"/>
        <dbReference type="ChEBI" id="CHEBI:74497"/>
        <dbReference type="EC" id="2.1.1.192"/>
    </reaction>
</comment>
<comment type="catalytic activity">
    <reaction evidence="1">
        <text>adenosine(37) in tRNA + 2 reduced [2Fe-2S]-[ferredoxin] + 2 S-adenosyl-L-methionine = 2-methyladenosine(37) in tRNA + 5'-deoxyadenosine + L-methionine + 2 oxidized [2Fe-2S]-[ferredoxin] + S-adenosyl-L-homocysteine</text>
        <dbReference type="Rhea" id="RHEA:43332"/>
        <dbReference type="Rhea" id="RHEA-COMP:10000"/>
        <dbReference type="Rhea" id="RHEA-COMP:10001"/>
        <dbReference type="Rhea" id="RHEA-COMP:10162"/>
        <dbReference type="Rhea" id="RHEA-COMP:10485"/>
        <dbReference type="ChEBI" id="CHEBI:17319"/>
        <dbReference type="ChEBI" id="CHEBI:33737"/>
        <dbReference type="ChEBI" id="CHEBI:33738"/>
        <dbReference type="ChEBI" id="CHEBI:57844"/>
        <dbReference type="ChEBI" id="CHEBI:57856"/>
        <dbReference type="ChEBI" id="CHEBI:59789"/>
        <dbReference type="ChEBI" id="CHEBI:74411"/>
        <dbReference type="ChEBI" id="CHEBI:74497"/>
        <dbReference type="EC" id="2.1.1.192"/>
    </reaction>
</comment>
<comment type="cofactor">
    <cofactor evidence="1">
        <name>[4Fe-4S] cluster</name>
        <dbReference type="ChEBI" id="CHEBI:49883"/>
    </cofactor>
    <text evidence="1">Binds 1 [4Fe-4S] cluster. The cluster is coordinated with 3 cysteines and an exchangeable S-adenosyl-L-methionine.</text>
</comment>
<comment type="subcellular location">
    <subcellularLocation>
        <location evidence="1">Cytoplasm</location>
    </subcellularLocation>
</comment>
<comment type="miscellaneous">
    <text evidence="1">Reaction proceeds by a ping-pong mechanism involving intermediate methylation of a conserved cysteine residue.</text>
</comment>
<comment type="similarity">
    <text evidence="1">Belongs to the radical SAM superfamily. RlmN family.</text>
</comment>
<keyword id="KW-0004">4Fe-4S</keyword>
<keyword id="KW-0963">Cytoplasm</keyword>
<keyword id="KW-1015">Disulfide bond</keyword>
<keyword id="KW-0408">Iron</keyword>
<keyword id="KW-0411">Iron-sulfur</keyword>
<keyword id="KW-0479">Metal-binding</keyword>
<keyword id="KW-0489">Methyltransferase</keyword>
<keyword id="KW-1185">Reference proteome</keyword>
<keyword id="KW-0698">rRNA processing</keyword>
<keyword id="KW-0949">S-adenosyl-L-methionine</keyword>
<keyword id="KW-0808">Transferase</keyword>
<keyword id="KW-0819">tRNA processing</keyword>
<proteinExistence type="inferred from homology"/>
<dbReference type="EC" id="2.1.1.192" evidence="1"/>
<dbReference type="EMBL" id="CR378665">
    <property type="protein sequence ID" value="CAG19173.1"/>
    <property type="molecule type" value="Genomic_DNA"/>
</dbReference>
<dbReference type="RefSeq" id="WP_011217515.1">
    <property type="nucleotide sequence ID" value="NC_006370.1"/>
</dbReference>
<dbReference type="SMR" id="Q6LU52"/>
<dbReference type="STRING" id="298386.PBPRA0760"/>
<dbReference type="KEGG" id="ppr:PBPRA0760"/>
<dbReference type="eggNOG" id="COG0820">
    <property type="taxonomic scope" value="Bacteria"/>
</dbReference>
<dbReference type="HOGENOM" id="CLU_029101_0_0_6"/>
<dbReference type="Proteomes" id="UP000000593">
    <property type="component" value="Chromosome 1"/>
</dbReference>
<dbReference type="GO" id="GO:0005737">
    <property type="term" value="C:cytoplasm"/>
    <property type="evidence" value="ECO:0007669"/>
    <property type="project" value="UniProtKB-SubCell"/>
</dbReference>
<dbReference type="GO" id="GO:0051539">
    <property type="term" value="F:4 iron, 4 sulfur cluster binding"/>
    <property type="evidence" value="ECO:0007669"/>
    <property type="project" value="UniProtKB-UniRule"/>
</dbReference>
<dbReference type="GO" id="GO:0046872">
    <property type="term" value="F:metal ion binding"/>
    <property type="evidence" value="ECO:0007669"/>
    <property type="project" value="UniProtKB-KW"/>
</dbReference>
<dbReference type="GO" id="GO:0070040">
    <property type="term" value="F:rRNA (adenine(2503)-C2-)-methyltransferase activity"/>
    <property type="evidence" value="ECO:0007669"/>
    <property type="project" value="UniProtKB-UniRule"/>
</dbReference>
<dbReference type="GO" id="GO:0019843">
    <property type="term" value="F:rRNA binding"/>
    <property type="evidence" value="ECO:0007669"/>
    <property type="project" value="UniProtKB-UniRule"/>
</dbReference>
<dbReference type="GO" id="GO:0002935">
    <property type="term" value="F:tRNA (adenine(37)-C2)-methyltransferase activity"/>
    <property type="evidence" value="ECO:0007669"/>
    <property type="project" value="UniProtKB-UniRule"/>
</dbReference>
<dbReference type="GO" id="GO:0000049">
    <property type="term" value="F:tRNA binding"/>
    <property type="evidence" value="ECO:0007669"/>
    <property type="project" value="UniProtKB-UniRule"/>
</dbReference>
<dbReference type="GO" id="GO:0070475">
    <property type="term" value="P:rRNA base methylation"/>
    <property type="evidence" value="ECO:0007669"/>
    <property type="project" value="UniProtKB-UniRule"/>
</dbReference>
<dbReference type="GO" id="GO:0030488">
    <property type="term" value="P:tRNA methylation"/>
    <property type="evidence" value="ECO:0007669"/>
    <property type="project" value="UniProtKB-UniRule"/>
</dbReference>
<dbReference type="CDD" id="cd01335">
    <property type="entry name" value="Radical_SAM"/>
    <property type="match status" value="1"/>
</dbReference>
<dbReference type="FunFam" id="1.10.150.530:FF:000003">
    <property type="entry name" value="Dual-specificity RNA methyltransferase RlmN"/>
    <property type="match status" value="1"/>
</dbReference>
<dbReference type="FunFam" id="3.20.20.70:FF:000008">
    <property type="entry name" value="Dual-specificity RNA methyltransferase RlmN"/>
    <property type="match status" value="1"/>
</dbReference>
<dbReference type="Gene3D" id="1.10.150.530">
    <property type="match status" value="1"/>
</dbReference>
<dbReference type="Gene3D" id="3.20.20.70">
    <property type="entry name" value="Aldolase class I"/>
    <property type="match status" value="1"/>
</dbReference>
<dbReference type="HAMAP" id="MF_01849">
    <property type="entry name" value="RNA_methyltr_RlmN"/>
    <property type="match status" value="1"/>
</dbReference>
<dbReference type="InterPro" id="IPR013785">
    <property type="entry name" value="Aldolase_TIM"/>
</dbReference>
<dbReference type="InterPro" id="IPR040072">
    <property type="entry name" value="Methyltransferase_A"/>
</dbReference>
<dbReference type="InterPro" id="IPR048641">
    <property type="entry name" value="RlmN_N"/>
</dbReference>
<dbReference type="InterPro" id="IPR027492">
    <property type="entry name" value="RNA_MTrfase_RlmN"/>
</dbReference>
<dbReference type="InterPro" id="IPR004383">
    <property type="entry name" value="rRNA_lsu_MTrfase_RlmN/Cfr"/>
</dbReference>
<dbReference type="InterPro" id="IPR007197">
    <property type="entry name" value="rSAM"/>
</dbReference>
<dbReference type="NCBIfam" id="NF008396">
    <property type="entry name" value="PRK11194.1"/>
    <property type="match status" value="1"/>
</dbReference>
<dbReference type="NCBIfam" id="TIGR00048">
    <property type="entry name" value="rRNA_mod_RlmN"/>
    <property type="match status" value="1"/>
</dbReference>
<dbReference type="PANTHER" id="PTHR30544">
    <property type="entry name" value="23S RRNA METHYLTRANSFERASE"/>
    <property type="match status" value="1"/>
</dbReference>
<dbReference type="PANTHER" id="PTHR30544:SF5">
    <property type="entry name" value="RADICAL SAM CORE DOMAIN-CONTAINING PROTEIN"/>
    <property type="match status" value="1"/>
</dbReference>
<dbReference type="Pfam" id="PF04055">
    <property type="entry name" value="Radical_SAM"/>
    <property type="match status" value="1"/>
</dbReference>
<dbReference type="Pfam" id="PF21016">
    <property type="entry name" value="RlmN_N"/>
    <property type="match status" value="1"/>
</dbReference>
<dbReference type="PIRSF" id="PIRSF006004">
    <property type="entry name" value="CHP00048"/>
    <property type="match status" value="1"/>
</dbReference>
<dbReference type="SFLD" id="SFLDF00275">
    <property type="entry name" value="adenosine_C2_methyltransferase"/>
    <property type="match status" value="1"/>
</dbReference>
<dbReference type="SFLD" id="SFLDS00029">
    <property type="entry name" value="Radical_SAM"/>
    <property type="match status" value="1"/>
</dbReference>
<dbReference type="SUPFAM" id="SSF102114">
    <property type="entry name" value="Radical SAM enzymes"/>
    <property type="match status" value="1"/>
</dbReference>
<dbReference type="PROSITE" id="PS51918">
    <property type="entry name" value="RADICAL_SAM"/>
    <property type="match status" value="1"/>
</dbReference>
<feature type="chain" id="PRO_0000350306" description="Dual-specificity RNA methyltransferase RlmN">
    <location>
        <begin position="1"/>
        <end position="373"/>
    </location>
</feature>
<feature type="domain" description="Radical SAM core" evidence="2">
    <location>
        <begin position="100"/>
        <end position="339"/>
    </location>
</feature>
<feature type="active site" description="Proton acceptor" evidence="1">
    <location>
        <position position="94"/>
    </location>
</feature>
<feature type="active site" description="S-methylcysteine intermediate" evidence="1">
    <location>
        <position position="344"/>
    </location>
</feature>
<feature type="binding site" evidence="1">
    <location>
        <position position="114"/>
    </location>
    <ligand>
        <name>[4Fe-4S] cluster</name>
        <dbReference type="ChEBI" id="CHEBI:49883"/>
        <note>4Fe-4S-S-AdoMet</note>
    </ligand>
</feature>
<feature type="binding site" evidence="1">
    <location>
        <position position="118"/>
    </location>
    <ligand>
        <name>[4Fe-4S] cluster</name>
        <dbReference type="ChEBI" id="CHEBI:49883"/>
        <note>4Fe-4S-S-AdoMet</note>
    </ligand>
</feature>
<feature type="binding site" evidence="1">
    <location>
        <position position="121"/>
    </location>
    <ligand>
        <name>[4Fe-4S] cluster</name>
        <dbReference type="ChEBI" id="CHEBI:49883"/>
        <note>4Fe-4S-S-AdoMet</note>
    </ligand>
</feature>
<feature type="binding site" evidence="1">
    <location>
        <begin position="168"/>
        <end position="169"/>
    </location>
    <ligand>
        <name>S-adenosyl-L-methionine</name>
        <dbReference type="ChEBI" id="CHEBI:59789"/>
    </ligand>
</feature>
<feature type="binding site" evidence="1">
    <location>
        <position position="200"/>
    </location>
    <ligand>
        <name>S-adenosyl-L-methionine</name>
        <dbReference type="ChEBI" id="CHEBI:59789"/>
    </ligand>
</feature>
<feature type="binding site" evidence="1">
    <location>
        <begin position="222"/>
        <end position="224"/>
    </location>
    <ligand>
        <name>S-adenosyl-L-methionine</name>
        <dbReference type="ChEBI" id="CHEBI:59789"/>
    </ligand>
</feature>
<feature type="binding site" evidence="1">
    <location>
        <position position="301"/>
    </location>
    <ligand>
        <name>S-adenosyl-L-methionine</name>
        <dbReference type="ChEBI" id="CHEBI:59789"/>
    </ligand>
</feature>
<feature type="disulfide bond" description="(transient)" evidence="1">
    <location>
        <begin position="107"/>
        <end position="344"/>
    </location>
</feature>
<sequence length="373" mass="42039">MTTVKTNLLDLDRKGLRTYFAEELNEKAFRADQIMKWIYQFGCDDFDQMTNINKKLREKLKRVAEIRAPYVSQAQHSVDGTIKWAMRVGDQDVETVYIPDGDRATLCVSSQVGCALACTFCSTAQQGFNRNLRVSEIIGQVWRAAKEIGIEKDTGRRPITNVVMMGMGEPLLNMKNLIPALEIMLDDIGFGLSKRRVTVSTSGVVSGLDQMTGNIDVALAISLHAPTDELRSQIMPINDRFNIATFLESVSRYIEQSNANRGRVTVEYILLDHVNDDMEHARQLAVLLKDTPAKINLIPFNPYPGSPYRKPSNSRIDRFMKTLMEYDFTVTVRKTRGDDIDAACGQLVGDVIDRTKRTQVKQHDGEQIPVKTV</sequence>
<reference key="1">
    <citation type="journal article" date="2005" name="Science">
        <title>Life at depth: Photobacterium profundum genome sequence and expression analysis.</title>
        <authorList>
            <person name="Vezzi A."/>
            <person name="Campanaro S."/>
            <person name="D'Angelo M."/>
            <person name="Simonato F."/>
            <person name="Vitulo N."/>
            <person name="Lauro F.M."/>
            <person name="Cestaro A."/>
            <person name="Malacrida G."/>
            <person name="Simionati B."/>
            <person name="Cannata N."/>
            <person name="Romualdi C."/>
            <person name="Bartlett D.H."/>
            <person name="Valle G."/>
        </authorList>
    </citation>
    <scope>NUCLEOTIDE SEQUENCE [LARGE SCALE GENOMIC DNA]</scope>
    <source>
        <strain>ATCC BAA-1253 / SS9</strain>
    </source>
</reference>